<keyword id="KW-0963">Cytoplasm</keyword>
<keyword id="KW-0269">Exonuclease</keyword>
<keyword id="KW-0378">Hydrolase</keyword>
<keyword id="KW-0540">Nuclease</keyword>
<protein>
    <recommendedName>
        <fullName evidence="1">Exodeoxyribonuclease 7 large subunit</fullName>
        <ecNumber evidence="1">3.1.11.6</ecNumber>
    </recommendedName>
    <alternativeName>
        <fullName evidence="1">Exodeoxyribonuclease VII large subunit</fullName>
        <shortName evidence="1">Exonuclease VII large subunit</shortName>
    </alternativeName>
</protein>
<dbReference type="EC" id="3.1.11.6" evidence="1"/>
<dbReference type="EMBL" id="AP007281">
    <property type="protein sequence ID" value="BAG25631.1"/>
    <property type="molecule type" value="Genomic_DNA"/>
</dbReference>
<dbReference type="RefSeq" id="WP_003668406.1">
    <property type="nucleotide sequence ID" value="NC_010609.1"/>
</dbReference>
<dbReference type="SMR" id="B2G849"/>
<dbReference type="KEGG" id="lrf:LAR_1115"/>
<dbReference type="HOGENOM" id="CLU_023625_2_0_9"/>
<dbReference type="GO" id="GO:0005737">
    <property type="term" value="C:cytoplasm"/>
    <property type="evidence" value="ECO:0007669"/>
    <property type="project" value="UniProtKB-SubCell"/>
</dbReference>
<dbReference type="GO" id="GO:0009318">
    <property type="term" value="C:exodeoxyribonuclease VII complex"/>
    <property type="evidence" value="ECO:0007669"/>
    <property type="project" value="InterPro"/>
</dbReference>
<dbReference type="GO" id="GO:0008855">
    <property type="term" value="F:exodeoxyribonuclease VII activity"/>
    <property type="evidence" value="ECO:0007669"/>
    <property type="project" value="UniProtKB-UniRule"/>
</dbReference>
<dbReference type="GO" id="GO:0003676">
    <property type="term" value="F:nucleic acid binding"/>
    <property type="evidence" value="ECO:0007669"/>
    <property type="project" value="InterPro"/>
</dbReference>
<dbReference type="GO" id="GO:0006308">
    <property type="term" value="P:DNA catabolic process"/>
    <property type="evidence" value="ECO:0007669"/>
    <property type="project" value="UniProtKB-UniRule"/>
</dbReference>
<dbReference type="CDD" id="cd04489">
    <property type="entry name" value="ExoVII_LU_OBF"/>
    <property type="match status" value="1"/>
</dbReference>
<dbReference type="HAMAP" id="MF_00378">
    <property type="entry name" value="Exonuc_7_L"/>
    <property type="match status" value="1"/>
</dbReference>
<dbReference type="InterPro" id="IPR003753">
    <property type="entry name" value="Exonuc_VII_L"/>
</dbReference>
<dbReference type="InterPro" id="IPR020579">
    <property type="entry name" value="Exonuc_VII_lsu_C"/>
</dbReference>
<dbReference type="InterPro" id="IPR025824">
    <property type="entry name" value="OB-fold_nuc-bd_dom"/>
</dbReference>
<dbReference type="NCBIfam" id="TIGR00237">
    <property type="entry name" value="xseA"/>
    <property type="match status" value="1"/>
</dbReference>
<dbReference type="PANTHER" id="PTHR30008">
    <property type="entry name" value="EXODEOXYRIBONUCLEASE 7 LARGE SUBUNIT"/>
    <property type="match status" value="1"/>
</dbReference>
<dbReference type="PANTHER" id="PTHR30008:SF0">
    <property type="entry name" value="EXODEOXYRIBONUCLEASE 7 LARGE SUBUNIT"/>
    <property type="match status" value="1"/>
</dbReference>
<dbReference type="Pfam" id="PF02601">
    <property type="entry name" value="Exonuc_VII_L"/>
    <property type="match status" value="1"/>
</dbReference>
<dbReference type="Pfam" id="PF13742">
    <property type="entry name" value="tRNA_anti_2"/>
    <property type="match status" value="1"/>
</dbReference>
<reference key="1">
    <citation type="journal article" date="2008" name="DNA Res.">
        <title>Comparative genome analysis of Lactobacillus reuteri and Lactobacillus fermentum reveal a genomic island for reuterin and cobalamin production.</title>
        <authorList>
            <person name="Morita H."/>
            <person name="Toh H."/>
            <person name="Fukuda S."/>
            <person name="Horikawa H."/>
            <person name="Oshima K."/>
            <person name="Suzuki T."/>
            <person name="Murakami M."/>
            <person name="Hisamatsu S."/>
            <person name="Kato Y."/>
            <person name="Takizawa T."/>
            <person name="Fukuoka H."/>
            <person name="Yoshimura T."/>
            <person name="Itoh K."/>
            <person name="O'Sullivan D.J."/>
            <person name="McKay L.L."/>
            <person name="Ohno H."/>
            <person name="Kikuchi J."/>
            <person name="Masaoka T."/>
            <person name="Hattori M."/>
        </authorList>
    </citation>
    <scope>NUCLEOTIDE SEQUENCE [LARGE SCALE GENOMIC DNA]</scope>
    <source>
        <strain>JCM 1112</strain>
    </source>
</reference>
<evidence type="ECO:0000255" key="1">
    <source>
        <dbReference type="HAMAP-Rule" id="MF_00378"/>
    </source>
</evidence>
<accession>B2G849</accession>
<sequence>MDRSQYLTVSELTKYLKMKFDRDPYLHTVYLTGELSNFRLRQKHQYFSLKDDNAVIDAVMFEHQFRKIKFTPEQGMKVCVVGHVSLYEKSGRYQIYIDRMEPDGLGSLYLAFEQLKKKLSAEGLFNLPKKQIPMFPKRIAVVTSIDGAVIRDINTTVRRRYPIAQVVLYPTVVQGDKAAADIARQINRANDRGDFDTLIIGRGGGSMEDLWPFNEEVVARAIANSKIPVISSVGHETDTTIADLVADQRAATPTAAAELATPVKLNDALMTLKDDQNRLLNTMRTKINFDRQQLNKQLQSYIFQQPTRLYENYAQKVDQLTQQLGQAAQNKMQELQMNVERLSGRLTAASPLHRVQQQEQLVDQLKKQLVTASLASQNEKKQQVTTLIKQLDSLSPLKIMSRGYTYVTSDEKVVNHASQLTVGQNVHLHFDDGEVQAEIKKVKEH</sequence>
<feature type="chain" id="PRO_1000122071" description="Exodeoxyribonuclease 7 large subunit">
    <location>
        <begin position="1"/>
        <end position="445"/>
    </location>
</feature>
<proteinExistence type="inferred from homology"/>
<comment type="function">
    <text evidence="1">Bidirectionally degrades single-stranded DNA into large acid-insoluble oligonucleotides, which are then degraded further into small acid-soluble oligonucleotides.</text>
</comment>
<comment type="catalytic activity">
    <reaction evidence="1">
        <text>Exonucleolytic cleavage in either 5'- to 3'- or 3'- to 5'-direction to yield nucleoside 5'-phosphates.</text>
        <dbReference type="EC" id="3.1.11.6"/>
    </reaction>
</comment>
<comment type="subunit">
    <text evidence="1">Heterooligomer composed of large and small subunits.</text>
</comment>
<comment type="subcellular location">
    <subcellularLocation>
        <location evidence="1">Cytoplasm</location>
    </subcellularLocation>
</comment>
<comment type="similarity">
    <text evidence="1">Belongs to the XseA family.</text>
</comment>
<name>EX7L_LIMRJ</name>
<gene>
    <name evidence="1" type="primary">xseA</name>
    <name type="ordered locus">LAR_1115</name>
</gene>
<organism>
    <name type="scientific">Limosilactobacillus reuteri subsp. reuteri (strain JCM 1112)</name>
    <name type="common">Lactobacillus reuteri</name>
    <dbReference type="NCBI Taxonomy" id="557433"/>
    <lineage>
        <taxon>Bacteria</taxon>
        <taxon>Bacillati</taxon>
        <taxon>Bacillota</taxon>
        <taxon>Bacilli</taxon>
        <taxon>Lactobacillales</taxon>
        <taxon>Lactobacillaceae</taxon>
        <taxon>Limosilactobacillus</taxon>
    </lineage>
</organism>